<gene>
    <name type="primary">gch31</name>
    <name type="ordered locus">VNG_1011C</name>
</gene>
<organism>
    <name type="scientific">Halobacterium salinarum (strain ATCC 700922 / JCM 11081 / NRC-1)</name>
    <name type="common">Halobacterium halobium</name>
    <dbReference type="NCBI Taxonomy" id="64091"/>
    <lineage>
        <taxon>Archaea</taxon>
        <taxon>Methanobacteriati</taxon>
        <taxon>Methanobacteriota</taxon>
        <taxon>Stenosarchaea group</taxon>
        <taxon>Halobacteria</taxon>
        <taxon>Halobacteriales</taxon>
        <taxon>Halobacteriaceae</taxon>
        <taxon>Halobacterium</taxon>
        <taxon>Halobacterium salinarum NRC-34001</taxon>
    </lineage>
</organism>
<accession>Q9HQT7</accession>
<name>GCH31_HALSA</name>
<sequence>MTNTQVTLVQLDNYGPWTVTPSPRREVDLQTLQSRLYADLSQAIGTRDGYVFFTRFDNMIAVTNGLDLEAHARVQESIRNRYPITASLSIGTGSTPADALVGATGALQQQGSAQDADRRETLLGQPIPDAERTDDDVQIAHFDVIDATGTYTDELDAFASFTHIEAGYAALMRHMHDAHDSLSFFVGGDNIIAVCPGLSDGDYEDAIAHVQDTADVALRVGVGRGASAHDAGMGAKHALEVAREHDTIVERSGRQ</sequence>
<comment type="function">
    <text evidence="1">Catalyzes the formation of 2-amino-5-formylamino-6-ribofuranosylamino-4(3H)-pyrimidinone ribonucleotide monophosphate and inorganic phosphate from GTP. Also has an independent pyrophosphate phosphohydrolase activity (By similarity).</text>
</comment>
<comment type="catalytic activity">
    <reaction>
        <text>GTP + 3 H2O = 2-amino-5-formylamino-6-(5-phospho-D-ribosylamino)pyrimidin-4(3H)-one + 2 phosphate + 2 H(+)</text>
        <dbReference type="Rhea" id="RHEA:22468"/>
        <dbReference type="ChEBI" id="CHEBI:15377"/>
        <dbReference type="ChEBI" id="CHEBI:15378"/>
        <dbReference type="ChEBI" id="CHEBI:37565"/>
        <dbReference type="ChEBI" id="CHEBI:43474"/>
        <dbReference type="ChEBI" id="CHEBI:57258"/>
        <dbReference type="EC" id="3.5.4.29"/>
    </reaction>
</comment>
<comment type="similarity">
    <text evidence="2">Belongs to the archaeal-type GTP cyclohydrolase family.</text>
</comment>
<comment type="sequence caution" evidence="2">
    <conflict type="erroneous initiation">
        <sequence resource="EMBL-CDS" id="AAG19426"/>
    </conflict>
</comment>
<keyword id="KW-0342">GTP-binding</keyword>
<keyword id="KW-0378">Hydrolase</keyword>
<keyword id="KW-0547">Nucleotide-binding</keyword>
<keyword id="KW-1185">Reference proteome</keyword>
<reference key="1">
    <citation type="journal article" date="2000" name="Proc. Natl. Acad. Sci. U.S.A.">
        <title>Genome sequence of Halobacterium species NRC-1.</title>
        <authorList>
            <person name="Ng W.V."/>
            <person name="Kennedy S.P."/>
            <person name="Mahairas G.G."/>
            <person name="Berquist B."/>
            <person name="Pan M."/>
            <person name="Shukla H.D."/>
            <person name="Lasky S.R."/>
            <person name="Baliga N.S."/>
            <person name="Thorsson V."/>
            <person name="Sbrogna J."/>
            <person name="Swartzell S."/>
            <person name="Weir D."/>
            <person name="Hall J."/>
            <person name="Dahl T.A."/>
            <person name="Welti R."/>
            <person name="Goo Y.A."/>
            <person name="Leithauser B."/>
            <person name="Keller K."/>
            <person name="Cruz R."/>
            <person name="Danson M.J."/>
            <person name="Hough D.W."/>
            <person name="Maddocks D.G."/>
            <person name="Jablonski P.E."/>
            <person name="Krebs M.P."/>
            <person name="Angevine C.M."/>
            <person name="Dale H."/>
            <person name="Isenbarger T.A."/>
            <person name="Peck R.F."/>
            <person name="Pohlschroder M."/>
            <person name="Spudich J.L."/>
            <person name="Jung K.-H."/>
            <person name="Alam M."/>
            <person name="Freitas T."/>
            <person name="Hou S."/>
            <person name="Daniels C.J."/>
            <person name="Dennis P.P."/>
            <person name="Omer A.D."/>
            <person name="Ebhardt H."/>
            <person name="Lowe T.M."/>
            <person name="Liang P."/>
            <person name="Riley M."/>
            <person name="Hood L."/>
            <person name="DasSarma S."/>
        </authorList>
    </citation>
    <scope>NUCLEOTIDE SEQUENCE [LARGE SCALE GENOMIC DNA]</scope>
    <source>
        <strain>ATCC 700922 / JCM 11081 / NRC-1</strain>
    </source>
</reference>
<protein>
    <recommendedName>
        <fullName>GTP cyclohydrolase III 1</fullName>
        <ecNumber>3.5.4.29</ecNumber>
    </recommendedName>
</protein>
<evidence type="ECO:0000250" key="1"/>
<evidence type="ECO:0000305" key="2"/>
<feature type="chain" id="PRO_0000145752" description="GTP cyclohydrolase III 1">
    <location>
        <begin position="1"/>
        <end position="255"/>
    </location>
</feature>
<proteinExistence type="inferred from homology"/>
<dbReference type="EC" id="3.5.4.29"/>
<dbReference type="EMBL" id="AE004437">
    <property type="protein sequence ID" value="AAG19426.1"/>
    <property type="status" value="ALT_INIT"/>
    <property type="molecule type" value="Genomic_DNA"/>
</dbReference>
<dbReference type="PIR" id="F84257">
    <property type="entry name" value="F84257"/>
</dbReference>
<dbReference type="RefSeq" id="WP_010902721.1">
    <property type="nucleotide sequence ID" value="NC_002607.1"/>
</dbReference>
<dbReference type="SMR" id="Q9HQT7"/>
<dbReference type="FunCoup" id="Q9HQT7">
    <property type="interactions" value="5"/>
</dbReference>
<dbReference type="STRING" id="64091.VNG_1011C"/>
<dbReference type="PaxDb" id="64091-VNG_1011C"/>
<dbReference type="KEGG" id="hal:VNG_1011C"/>
<dbReference type="PATRIC" id="fig|64091.14.peg.773"/>
<dbReference type="HOGENOM" id="CLU_080076_0_0_2"/>
<dbReference type="InParanoid" id="Q9HQT7"/>
<dbReference type="OrthoDB" id="25211at2157"/>
<dbReference type="PhylomeDB" id="Q9HQT7"/>
<dbReference type="Proteomes" id="UP000000554">
    <property type="component" value="Chromosome"/>
</dbReference>
<dbReference type="GO" id="GO:0005525">
    <property type="term" value="F:GTP binding"/>
    <property type="evidence" value="ECO:0007669"/>
    <property type="project" value="UniProtKB-KW"/>
</dbReference>
<dbReference type="GO" id="GO:0043740">
    <property type="term" value="F:GTP cyclohydrolase IIa activity"/>
    <property type="evidence" value="ECO:0007669"/>
    <property type="project" value="UniProtKB-EC"/>
</dbReference>
<dbReference type="GO" id="GO:0009058">
    <property type="term" value="P:biosynthetic process"/>
    <property type="evidence" value="ECO:0007669"/>
    <property type="project" value="InterPro"/>
</dbReference>
<dbReference type="Gene3D" id="3.30.70.270">
    <property type="match status" value="1"/>
</dbReference>
<dbReference type="Gene3D" id="3.30.70.1230">
    <property type="entry name" value="Nucleotide cyclase"/>
    <property type="match status" value="1"/>
</dbReference>
<dbReference type="HAMAP" id="MF_00608">
    <property type="entry name" value="GTP_cyclohydro_3"/>
    <property type="match status" value="1"/>
</dbReference>
<dbReference type="InterPro" id="IPR007839">
    <property type="entry name" value="GTP_CycHdrlase_3"/>
</dbReference>
<dbReference type="InterPro" id="IPR029787">
    <property type="entry name" value="Nucleotide_cyclase"/>
</dbReference>
<dbReference type="InterPro" id="IPR043128">
    <property type="entry name" value="Rev_trsase/Diguanyl_cyclase"/>
</dbReference>
<dbReference type="NCBIfam" id="NF002587">
    <property type="entry name" value="PRK02240.1"/>
    <property type="match status" value="1"/>
</dbReference>
<dbReference type="PANTHER" id="PTHR42202">
    <property type="entry name" value="GTP CYCLOHYDROLASE III"/>
    <property type="match status" value="1"/>
</dbReference>
<dbReference type="PANTHER" id="PTHR42202:SF1">
    <property type="entry name" value="GTP CYCLOHYDROLASE III"/>
    <property type="match status" value="1"/>
</dbReference>
<dbReference type="Pfam" id="PF05165">
    <property type="entry name" value="GCH_III"/>
    <property type="match status" value="1"/>
</dbReference>
<dbReference type="PIRSF" id="PIRSF009265">
    <property type="entry name" value="GTP_cyclohydro_3"/>
    <property type="match status" value="1"/>
</dbReference>